<keyword id="KW-0997">Cell inner membrane</keyword>
<keyword id="KW-1003">Cell membrane</keyword>
<keyword id="KW-0472">Membrane</keyword>
<keyword id="KW-1185">Reference proteome</keyword>
<keyword id="KW-0812">Transmembrane</keyword>
<keyword id="KW-1133">Transmembrane helix</keyword>
<accession>P0AD29</accession>
<accession>P33922</accession>
<accession>P33923</accession>
<proteinExistence type="inferred from homology"/>
<sequence>MVTHRQRYREKVSQMVSWGHWFALFNILLSLVIGSRYLFIADWPTTLAGRIYSYVSIIGHFSFLVFATYLLILFPLTFIVGSQRLMRFLSVILATAGMTLLLIDSEVFTRFHLHLNPIVWQLVINPDENEMARDWQLMFISVPVILLLELVFATWSWQKLRSLTRRRRFARPLAAFLFIAFIASHVVYIWADANFYRPITMQRANLPLSYPMTARRFLEKHGLLDAQEYQRRLIEQGNPDAVSVQYPLSELRYRDMGTGQNVLLITVDGLNYSRFEKQMPALAGFAEQNISFTRHMSSGNTTDNGIFGLFYGISPSYMDGILSTRTPAALITALNQQGYQLGLFSSDGFTSPLYRQALLSDFSMPSVRTQSDEQTATQWINWLGRYAQEDNRWFSWVSFNGTNIDDSNQQAFARKYSRAAGNVDDQINRVLNALRDSGKLDNTVVIITAGRGIPLSEEEETFDWSHGHLQVPLVIHWPGTPAQRINALTDHTDLMTTLMQRLLHVSTPASEYSQGQDLFNPQRRHYWVTAADNDTLAITTPKKTLVLNNNGKYRTYNLRGERVKDEKPQLSLLLQVLTDEKRFIAN</sequence>
<name>YEJM_ECO57</name>
<organism>
    <name type="scientific">Escherichia coli O157:H7</name>
    <dbReference type="NCBI Taxonomy" id="83334"/>
    <lineage>
        <taxon>Bacteria</taxon>
        <taxon>Pseudomonadati</taxon>
        <taxon>Pseudomonadota</taxon>
        <taxon>Gammaproteobacteria</taxon>
        <taxon>Enterobacterales</taxon>
        <taxon>Enterobacteriaceae</taxon>
        <taxon>Escherichia</taxon>
    </lineage>
</organism>
<gene>
    <name type="primary">yejM</name>
    <name type="ordered locus">Z3447</name>
    <name type="ordered locus">ECs3080</name>
</gene>
<reference key="1">
    <citation type="journal article" date="2001" name="Nature">
        <title>Genome sequence of enterohaemorrhagic Escherichia coli O157:H7.</title>
        <authorList>
            <person name="Perna N.T."/>
            <person name="Plunkett G. III"/>
            <person name="Burland V."/>
            <person name="Mau B."/>
            <person name="Glasner J.D."/>
            <person name="Rose D.J."/>
            <person name="Mayhew G.F."/>
            <person name="Evans P.S."/>
            <person name="Gregor J."/>
            <person name="Kirkpatrick H.A."/>
            <person name="Posfai G."/>
            <person name="Hackett J."/>
            <person name="Klink S."/>
            <person name="Boutin A."/>
            <person name="Shao Y."/>
            <person name="Miller L."/>
            <person name="Grotbeck E.J."/>
            <person name="Davis N.W."/>
            <person name="Lim A."/>
            <person name="Dimalanta E.T."/>
            <person name="Potamousis K."/>
            <person name="Apodaca J."/>
            <person name="Anantharaman T.S."/>
            <person name="Lin J."/>
            <person name="Yen G."/>
            <person name="Schwartz D.C."/>
            <person name="Welch R.A."/>
            <person name="Blattner F.R."/>
        </authorList>
    </citation>
    <scope>NUCLEOTIDE SEQUENCE [LARGE SCALE GENOMIC DNA]</scope>
    <source>
        <strain>O157:H7 / EDL933 / ATCC 700927 / EHEC</strain>
    </source>
</reference>
<reference key="2">
    <citation type="journal article" date="2001" name="DNA Res.">
        <title>Complete genome sequence of enterohemorrhagic Escherichia coli O157:H7 and genomic comparison with a laboratory strain K-12.</title>
        <authorList>
            <person name="Hayashi T."/>
            <person name="Makino K."/>
            <person name="Ohnishi M."/>
            <person name="Kurokawa K."/>
            <person name="Ishii K."/>
            <person name="Yokoyama K."/>
            <person name="Han C.-G."/>
            <person name="Ohtsubo E."/>
            <person name="Nakayama K."/>
            <person name="Murata T."/>
            <person name="Tanaka M."/>
            <person name="Tobe T."/>
            <person name="Iida T."/>
            <person name="Takami H."/>
            <person name="Honda T."/>
            <person name="Sasakawa C."/>
            <person name="Ogasawara N."/>
            <person name="Yasunaga T."/>
            <person name="Kuhara S."/>
            <person name="Shiba T."/>
            <person name="Hattori M."/>
            <person name="Shinagawa H."/>
        </authorList>
    </citation>
    <scope>NUCLEOTIDE SEQUENCE [LARGE SCALE GENOMIC DNA]</scope>
    <source>
        <strain>O157:H7 / Sakai / RIMD 0509952 / EHEC</strain>
    </source>
</reference>
<evidence type="ECO:0000250" key="1"/>
<evidence type="ECO:0000255" key="2"/>
<evidence type="ECO:0000305" key="3"/>
<dbReference type="EMBL" id="AE005174">
    <property type="protein sequence ID" value="AAG57326.1"/>
    <property type="molecule type" value="Genomic_DNA"/>
</dbReference>
<dbReference type="EMBL" id="BA000007">
    <property type="protein sequence ID" value="BAB36503.1"/>
    <property type="molecule type" value="Genomic_DNA"/>
</dbReference>
<dbReference type="PIR" id="B85858">
    <property type="entry name" value="B85858"/>
</dbReference>
<dbReference type="PIR" id="H91013">
    <property type="entry name" value="H91013"/>
</dbReference>
<dbReference type="RefSeq" id="NP_311107.1">
    <property type="nucleotide sequence ID" value="NC_002695.1"/>
</dbReference>
<dbReference type="RefSeq" id="WP_000256203.1">
    <property type="nucleotide sequence ID" value="NZ_VOAI01000001.1"/>
</dbReference>
<dbReference type="SMR" id="P0AD29"/>
<dbReference type="STRING" id="155864.Z3447"/>
<dbReference type="GeneID" id="75172317"/>
<dbReference type="GeneID" id="916785"/>
<dbReference type="KEGG" id="ece:Z3447"/>
<dbReference type="KEGG" id="ecs:ECs_3080"/>
<dbReference type="PATRIC" id="fig|386585.9.peg.3213"/>
<dbReference type="eggNOG" id="COG3083">
    <property type="taxonomic scope" value="Bacteria"/>
</dbReference>
<dbReference type="HOGENOM" id="CLU_030247_1_0_6"/>
<dbReference type="OMA" id="QMLFSRW"/>
<dbReference type="Proteomes" id="UP000000558">
    <property type="component" value="Chromosome"/>
</dbReference>
<dbReference type="Proteomes" id="UP000002519">
    <property type="component" value="Chromosome"/>
</dbReference>
<dbReference type="GO" id="GO:0005886">
    <property type="term" value="C:plasma membrane"/>
    <property type="evidence" value="ECO:0007669"/>
    <property type="project" value="UniProtKB-SubCell"/>
</dbReference>
<dbReference type="FunFam" id="3.40.720.10:FF:000014">
    <property type="entry name" value="Hydrolase, inner membrane"/>
    <property type="match status" value="1"/>
</dbReference>
<dbReference type="Gene3D" id="3.40.720.10">
    <property type="entry name" value="Alkaline Phosphatase, subunit A"/>
    <property type="match status" value="1"/>
</dbReference>
<dbReference type="InterPro" id="IPR017850">
    <property type="entry name" value="Alkaline_phosphatase_core_sf"/>
</dbReference>
<dbReference type="InterPro" id="IPR000917">
    <property type="entry name" value="Sulfatase_N"/>
</dbReference>
<dbReference type="InterPro" id="IPR012159">
    <property type="entry name" value="YejM-like"/>
</dbReference>
<dbReference type="InterPro" id="IPR047997">
    <property type="entry name" value="YejM_enterobact"/>
</dbReference>
<dbReference type="InterPro" id="IPR024588">
    <property type="entry name" value="YejM_N"/>
</dbReference>
<dbReference type="NCBIfam" id="NF038282">
    <property type="entry name" value="LapC_YejM_PbgA"/>
    <property type="match status" value="1"/>
</dbReference>
<dbReference type="PANTHER" id="PTHR43108:SF10">
    <property type="entry name" value="INNER MEMBRANE PROTEIN YEJM"/>
    <property type="match status" value="1"/>
</dbReference>
<dbReference type="PANTHER" id="PTHR43108">
    <property type="entry name" value="N-ACETYLGLUCOSAMINE-6-SULFATASE FAMILY MEMBER"/>
    <property type="match status" value="1"/>
</dbReference>
<dbReference type="Pfam" id="PF11893">
    <property type="entry name" value="DUF3413"/>
    <property type="match status" value="1"/>
</dbReference>
<dbReference type="Pfam" id="PF00884">
    <property type="entry name" value="Sulfatase"/>
    <property type="match status" value="1"/>
</dbReference>
<dbReference type="PIRSF" id="PIRSF004950">
    <property type="entry name" value="Mmb_sulf_HI0842"/>
    <property type="match status" value="1"/>
</dbReference>
<dbReference type="SUPFAM" id="SSF53649">
    <property type="entry name" value="Alkaline phosphatase-like"/>
    <property type="match status" value="1"/>
</dbReference>
<protein>
    <recommendedName>
        <fullName>Inner membrane protein YejM</fullName>
    </recommendedName>
</protein>
<feature type="chain" id="PRO_0000169166" description="Inner membrane protein YejM">
    <location>
        <begin position="1"/>
        <end position="586"/>
    </location>
</feature>
<feature type="topological domain" description="Cytoplasmic" evidence="2">
    <location>
        <begin position="1"/>
        <end position="20"/>
    </location>
</feature>
<feature type="transmembrane region" description="Helical" evidence="2">
    <location>
        <begin position="21"/>
        <end position="43"/>
    </location>
</feature>
<feature type="topological domain" description="Periplasmic" evidence="2">
    <location>
        <begin position="44"/>
        <end position="57"/>
    </location>
</feature>
<feature type="transmembrane region" description="Helical" evidence="2">
    <location>
        <begin position="58"/>
        <end position="80"/>
    </location>
</feature>
<feature type="topological domain" description="Cytoplasmic" evidence="2">
    <location>
        <begin position="81"/>
        <end position="84"/>
    </location>
</feature>
<feature type="transmembrane region" description="Helical" evidence="2">
    <location>
        <begin position="85"/>
        <end position="103"/>
    </location>
</feature>
<feature type="topological domain" description="Periplasmic" evidence="2">
    <location>
        <begin position="104"/>
        <end position="134"/>
    </location>
</feature>
<feature type="transmembrane region" description="Helical" evidence="2">
    <location>
        <begin position="135"/>
        <end position="157"/>
    </location>
</feature>
<feature type="topological domain" description="Cytoplasmic" evidence="2">
    <location>
        <begin position="158"/>
        <end position="168"/>
    </location>
</feature>
<feature type="transmembrane region" description="Helical" evidence="2">
    <location>
        <begin position="169"/>
        <end position="191"/>
    </location>
</feature>
<feature type="topological domain" description="Periplasmic" evidence="2">
    <location>
        <begin position="192"/>
        <end position="586"/>
    </location>
</feature>
<comment type="subcellular location">
    <subcellularLocation>
        <location evidence="1">Cell inner membrane</location>
        <topology evidence="1">Multi-pass membrane protein</topology>
    </subcellularLocation>
</comment>
<comment type="similarity">
    <text evidence="3">To H.influenzae HI_0842.</text>
</comment>